<reference key="1">
    <citation type="journal article" date="2004" name="Nat. Genet.">
        <title>Complete sequencing and characterization of 21,243 full-length human cDNAs.</title>
        <authorList>
            <person name="Ota T."/>
            <person name="Suzuki Y."/>
            <person name="Nishikawa T."/>
            <person name="Otsuki T."/>
            <person name="Sugiyama T."/>
            <person name="Irie R."/>
            <person name="Wakamatsu A."/>
            <person name="Hayashi K."/>
            <person name="Sato H."/>
            <person name="Nagai K."/>
            <person name="Kimura K."/>
            <person name="Makita H."/>
            <person name="Sekine M."/>
            <person name="Obayashi M."/>
            <person name="Nishi T."/>
            <person name="Shibahara T."/>
            <person name="Tanaka T."/>
            <person name="Ishii S."/>
            <person name="Yamamoto J."/>
            <person name="Saito K."/>
            <person name="Kawai Y."/>
            <person name="Isono Y."/>
            <person name="Nakamura Y."/>
            <person name="Nagahari K."/>
            <person name="Murakami K."/>
            <person name="Yasuda T."/>
            <person name="Iwayanagi T."/>
            <person name="Wagatsuma M."/>
            <person name="Shiratori A."/>
            <person name="Sudo H."/>
            <person name="Hosoiri T."/>
            <person name="Kaku Y."/>
            <person name="Kodaira H."/>
            <person name="Kondo H."/>
            <person name="Sugawara M."/>
            <person name="Takahashi M."/>
            <person name="Kanda K."/>
            <person name="Yokoi T."/>
            <person name="Furuya T."/>
            <person name="Kikkawa E."/>
            <person name="Omura Y."/>
            <person name="Abe K."/>
            <person name="Kamihara K."/>
            <person name="Katsuta N."/>
            <person name="Sato K."/>
            <person name="Tanikawa M."/>
            <person name="Yamazaki M."/>
            <person name="Ninomiya K."/>
            <person name="Ishibashi T."/>
            <person name="Yamashita H."/>
            <person name="Murakawa K."/>
            <person name="Fujimori K."/>
            <person name="Tanai H."/>
            <person name="Kimata M."/>
            <person name="Watanabe M."/>
            <person name="Hiraoka S."/>
            <person name="Chiba Y."/>
            <person name="Ishida S."/>
            <person name="Ono Y."/>
            <person name="Takiguchi S."/>
            <person name="Watanabe S."/>
            <person name="Yosida M."/>
            <person name="Hotuta T."/>
            <person name="Kusano J."/>
            <person name="Kanehori K."/>
            <person name="Takahashi-Fujii A."/>
            <person name="Hara H."/>
            <person name="Tanase T.-O."/>
            <person name="Nomura Y."/>
            <person name="Togiya S."/>
            <person name="Komai F."/>
            <person name="Hara R."/>
            <person name="Takeuchi K."/>
            <person name="Arita M."/>
            <person name="Imose N."/>
            <person name="Musashino K."/>
            <person name="Yuuki H."/>
            <person name="Oshima A."/>
            <person name="Sasaki N."/>
            <person name="Aotsuka S."/>
            <person name="Yoshikawa Y."/>
            <person name="Matsunawa H."/>
            <person name="Ichihara T."/>
            <person name="Shiohata N."/>
            <person name="Sano S."/>
            <person name="Moriya S."/>
            <person name="Momiyama H."/>
            <person name="Satoh N."/>
            <person name="Takami S."/>
            <person name="Terashima Y."/>
            <person name="Suzuki O."/>
            <person name="Nakagawa S."/>
            <person name="Senoh A."/>
            <person name="Mizoguchi H."/>
            <person name="Goto Y."/>
            <person name="Shimizu F."/>
            <person name="Wakebe H."/>
            <person name="Hishigaki H."/>
            <person name="Watanabe T."/>
            <person name="Sugiyama A."/>
            <person name="Takemoto M."/>
            <person name="Kawakami B."/>
            <person name="Yamazaki M."/>
            <person name="Watanabe K."/>
            <person name="Kumagai A."/>
            <person name="Itakura S."/>
            <person name="Fukuzumi Y."/>
            <person name="Fujimori Y."/>
            <person name="Komiyama M."/>
            <person name="Tashiro H."/>
            <person name="Tanigami A."/>
            <person name="Fujiwara T."/>
            <person name="Ono T."/>
            <person name="Yamada K."/>
            <person name="Fujii Y."/>
            <person name="Ozaki K."/>
            <person name="Hirao M."/>
            <person name="Ohmori Y."/>
            <person name="Kawabata A."/>
            <person name="Hikiji T."/>
            <person name="Kobatake N."/>
            <person name="Inagaki H."/>
            <person name="Ikema Y."/>
            <person name="Okamoto S."/>
            <person name="Okitani R."/>
            <person name="Kawakami T."/>
            <person name="Noguchi S."/>
            <person name="Itoh T."/>
            <person name="Shigeta K."/>
            <person name="Senba T."/>
            <person name="Matsumura K."/>
            <person name="Nakajima Y."/>
            <person name="Mizuno T."/>
            <person name="Morinaga M."/>
            <person name="Sasaki M."/>
            <person name="Togashi T."/>
            <person name="Oyama M."/>
            <person name="Hata H."/>
            <person name="Watanabe M."/>
            <person name="Komatsu T."/>
            <person name="Mizushima-Sugano J."/>
            <person name="Satoh T."/>
            <person name="Shirai Y."/>
            <person name="Takahashi Y."/>
            <person name="Nakagawa K."/>
            <person name="Okumura K."/>
            <person name="Nagase T."/>
            <person name="Nomura N."/>
            <person name="Kikuchi H."/>
            <person name="Masuho Y."/>
            <person name="Yamashita R."/>
            <person name="Nakai K."/>
            <person name="Yada T."/>
            <person name="Nakamura Y."/>
            <person name="Ohara O."/>
            <person name="Isogai T."/>
            <person name="Sugano S."/>
        </authorList>
    </citation>
    <scope>NUCLEOTIDE SEQUENCE [LARGE SCALE MRNA]</scope>
    <source>
        <tissue>Signet-ring cell carcinoma</tissue>
    </source>
</reference>
<reference key="2">
    <citation type="submission" date="2005-07" db="EMBL/GenBank/DDBJ databases">
        <authorList>
            <person name="Mural R.J."/>
            <person name="Istrail S."/>
            <person name="Sutton G.G."/>
            <person name="Florea L."/>
            <person name="Halpern A.L."/>
            <person name="Mobarry C.M."/>
            <person name="Lippert R."/>
            <person name="Walenz B."/>
            <person name="Shatkay H."/>
            <person name="Dew I."/>
            <person name="Miller J.R."/>
            <person name="Flanigan M.J."/>
            <person name="Edwards N.J."/>
            <person name="Bolanos R."/>
            <person name="Fasulo D."/>
            <person name="Halldorsson B.V."/>
            <person name="Hannenhalli S."/>
            <person name="Turner R."/>
            <person name="Yooseph S."/>
            <person name="Lu F."/>
            <person name="Nusskern D.R."/>
            <person name="Shue B.C."/>
            <person name="Zheng X.H."/>
            <person name="Zhong F."/>
            <person name="Delcher A.L."/>
            <person name="Huson D.H."/>
            <person name="Kravitz S.A."/>
            <person name="Mouchard L."/>
            <person name="Reinert K."/>
            <person name="Remington K.A."/>
            <person name="Clark A.G."/>
            <person name="Waterman M.S."/>
            <person name="Eichler E.E."/>
            <person name="Adams M.D."/>
            <person name="Hunkapiller M.W."/>
            <person name="Myers E.W."/>
            <person name="Venter J.C."/>
        </authorList>
    </citation>
    <scope>NUCLEOTIDE SEQUENCE [LARGE SCALE GENOMIC DNA]</scope>
</reference>
<reference key="3">
    <citation type="journal article" date="2004" name="Genome Res.">
        <title>The status, quality, and expansion of the NIH full-length cDNA project: the Mammalian Gene Collection (MGC).</title>
        <authorList>
            <consortium name="The MGC Project Team"/>
        </authorList>
    </citation>
    <scope>NUCLEOTIDE SEQUENCE [LARGE SCALE MRNA] (ISOFORMS 1 AND 2)</scope>
    <source>
        <tissue>Brain</tissue>
        <tissue>Skin</tissue>
    </source>
</reference>
<reference key="4">
    <citation type="journal article" date="2008" name="Nature">
        <title>Haem homeostasis is regulated by the conserved and concerted functions of HRG-1 proteins.</title>
        <authorList>
            <person name="Rajagopal A."/>
            <person name="Rao A.U."/>
            <person name="Amigo J."/>
            <person name="Tian M."/>
            <person name="Upadhyay S.K."/>
            <person name="Hall C."/>
            <person name="Uhm S."/>
            <person name="Mathew M.K."/>
            <person name="Fleming M.D."/>
            <person name="Paw B.H."/>
            <person name="Krause M."/>
            <person name="Hamza I."/>
        </authorList>
    </citation>
    <scope>FUNCTION</scope>
    <scope>SUBCELLULAR LOCATION</scope>
    <scope>HEME-BINDING</scope>
    <scope>TISSUE SPECIFICITY</scope>
    <scope>TRANSPORTER ACTIVITY</scope>
</reference>
<reference key="5">
    <citation type="journal article" date="2013" name="Cell Metab.">
        <title>HRG1 is essential for heme transport from the phagolysosome of macrophages during erythrophagocytosis.</title>
        <authorList>
            <person name="White C."/>
            <person name="Yuan X."/>
            <person name="Schmidt P.J."/>
            <person name="Bresciani E."/>
            <person name="Samuel T.K."/>
            <person name="Campagna D."/>
            <person name="Hall C."/>
            <person name="Bishop K."/>
            <person name="Calicchio M.L."/>
            <person name="Lapierre A."/>
            <person name="Ward D.M."/>
            <person name="Liu P."/>
            <person name="Fleming M.D."/>
            <person name="Hamza I."/>
        </authorList>
    </citation>
    <scope>FUNCTION</scope>
    <scope>TRANSPORTER ACTIVITY</scope>
    <scope>TISSUE SPECIFICITY</scope>
    <scope>SUBCELLULAR LOCATION</scope>
    <scope>INDUCTION BY IRON</scope>
    <scope>MUTAGENESIS OF PRO-36; GLY-73; SER-82 AND TRP-115</scope>
</reference>
<dbReference type="EMBL" id="AK000496">
    <property type="protein sequence ID" value="BAA91205.1"/>
    <property type="status" value="ALT_SEQ"/>
    <property type="molecule type" value="mRNA"/>
</dbReference>
<dbReference type="EMBL" id="CH471111">
    <property type="protein sequence ID" value="EAW57951.1"/>
    <property type="status" value="ALT_SEQ"/>
    <property type="molecule type" value="Genomic_DNA"/>
</dbReference>
<dbReference type="EMBL" id="BC002759">
    <property type="protein sequence ID" value="AAH02759.2"/>
    <property type="molecule type" value="mRNA"/>
</dbReference>
<dbReference type="EMBL" id="BC026344">
    <property type="protein sequence ID" value="AAH26344.2"/>
    <property type="status" value="ALT_SEQ"/>
    <property type="molecule type" value="mRNA"/>
</dbReference>
<dbReference type="EMBL" id="BC065033">
    <property type="protein sequence ID" value="AAH65033.1"/>
    <property type="molecule type" value="mRNA"/>
</dbReference>
<dbReference type="CCDS" id="CCDS8755.2">
    <molecule id="Q6P1K1-1"/>
</dbReference>
<dbReference type="RefSeq" id="NP_060312.2">
    <molecule id="Q6P1K1-1"/>
    <property type="nucleotide sequence ID" value="NM_017842.3"/>
</dbReference>
<dbReference type="RefSeq" id="XP_016875101.1">
    <property type="nucleotide sequence ID" value="XM_017019612.1"/>
</dbReference>
<dbReference type="RefSeq" id="XP_016875102.1">
    <property type="nucleotide sequence ID" value="XM_017019613.1"/>
</dbReference>
<dbReference type="RefSeq" id="XP_016875103.1">
    <property type="nucleotide sequence ID" value="XM_017019614.1"/>
</dbReference>
<dbReference type="RefSeq" id="XP_016875104.1">
    <property type="nucleotide sequence ID" value="XM_017019615.1"/>
</dbReference>
<dbReference type="RefSeq" id="XP_016875105.1">
    <property type="nucleotide sequence ID" value="XM_017019616.1"/>
</dbReference>
<dbReference type="RefSeq" id="XP_016875106.1">
    <molecule id="Q6P1K1-1"/>
    <property type="nucleotide sequence ID" value="XM_017019617.3"/>
</dbReference>
<dbReference type="RefSeq" id="XP_054228499.1">
    <molecule id="Q6P1K1-1"/>
    <property type="nucleotide sequence ID" value="XM_054372524.1"/>
</dbReference>
<dbReference type="BioGRID" id="120784">
    <property type="interactions" value="184"/>
</dbReference>
<dbReference type="FunCoup" id="Q6P1K1">
    <property type="interactions" value="264"/>
</dbReference>
<dbReference type="IntAct" id="Q6P1K1">
    <property type="interactions" value="13"/>
</dbReference>
<dbReference type="MINT" id="Q6P1K1"/>
<dbReference type="STRING" id="9606.ENSP00000415998"/>
<dbReference type="TCDB" id="2.A.110.1.1">
    <property type="family name" value="the heme transporter, heme-responsive gene protein (hrg) family"/>
</dbReference>
<dbReference type="iPTMnet" id="Q6P1K1"/>
<dbReference type="PhosphoSitePlus" id="Q6P1K1"/>
<dbReference type="SwissPalm" id="Q6P1K1"/>
<dbReference type="BioMuta" id="SLC48A1"/>
<dbReference type="jPOST" id="Q6P1K1"/>
<dbReference type="MassIVE" id="Q6P1K1"/>
<dbReference type="PaxDb" id="9606-ENSP00000415998"/>
<dbReference type="PeptideAtlas" id="Q6P1K1"/>
<dbReference type="ProteomicsDB" id="66835">
    <molecule id="Q6P1K1-1"/>
</dbReference>
<dbReference type="ProteomicsDB" id="66836">
    <molecule id="Q6P1K1-2"/>
</dbReference>
<dbReference type="TopDownProteomics" id="Q6P1K1-1">
    <molecule id="Q6P1K1-1"/>
</dbReference>
<dbReference type="Antibodypedia" id="25407">
    <property type="antibodies" value="20 antibodies from 11 providers"/>
</dbReference>
<dbReference type="DNASU" id="55652"/>
<dbReference type="Ensembl" id="ENST00000442218.3">
    <molecule id="Q6P1K1-1"/>
    <property type="protein sequence ID" value="ENSP00000415998.2"/>
    <property type="gene ID" value="ENSG00000211584.14"/>
</dbReference>
<dbReference type="Ensembl" id="ENST00000442892.2">
    <molecule id="Q6P1K1-2"/>
    <property type="protein sequence ID" value="ENSP00000410134.2"/>
    <property type="gene ID" value="ENSG00000211584.14"/>
</dbReference>
<dbReference type="Ensembl" id="ENST00000547002.5">
    <molecule id="Q6P1K1-2"/>
    <property type="protein sequence ID" value="ENSP00000446739.1"/>
    <property type="gene ID" value="ENSG00000211584.14"/>
</dbReference>
<dbReference type="GeneID" id="55652"/>
<dbReference type="KEGG" id="hsa:55652"/>
<dbReference type="MANE-Select" id="ENST00000442218.3">
    <property type="protein sequence ID" value="ENSP00000415998.2"/>
    <property type="RefSeq nucleotide sequence ID" value="NM_017842.3"/>
    <property type="RefSeq protein sequence ID" value="NP_060312.2"/>
</dbReference>
<dbReference type="UCSC" id="uc001rqc.4">
    <molecule id="Q6P1K1-1"/>
    <property type="organism name" value="human"/>
</dbReference>
<dbReference type="AGR" id="HGNC:26035"/>
<dbReference type="CTD" id="55652"/>
<dbReference type="DisGeNET" id="55652"/>
<dbReference type="GeneCards" id="SLC48A1"/>
<dbReference type="HGNC" id="HGNC:26035">
    <property type="gene designation" value="SLC48A1"/>
</dbReference>
<dbReference type="HPA" id="ENSG00000211584">
    <property type="expression patterns" value="Tissue enhanced (brain)"/>
</dbReference>
<dbReference type="MIM" id="612187">
    <property type="type" value="gene"/>
</dbReference>
<dbReference type="neXtProt" id="NX_Q6P1K1"/>
<dbReference type="OpenTargets" id="ENSG00000211584"/>
<dbReference type="PharmGKB" id="PA164725837"/>
<dbReference type="VEuPathDB" id="HostDB:ENSG00000211584"/>
<dbReference type="eggNOG" id="ENOG502S0AI">
    <property type="taxonomic scope" value="Eukaryota"/>
</dbReference>
<dbReference type="GeneTree" id="ENSGT00390000002307"/>
<dbReference type="HOGENOM" id="CLU_148774_0_0_1"/>
<dbReference type="InParanoid" id="Q6P1K1"/>
<dbReference type="OMA" id="RIHISIG"/>
<dbReference type="OrthoDB" id="5954402at2759"/>
<dbReference type="PAN-GO" id="Q6P1K1">
    <property type="GO annotations" value="5 GO annotations based on evolutionary models"/>
</dbReference>
<dbReference type="PhylomeDB" id="Q6P1K1"/>
<dbReference type="TreeFam" id="TF332621"/>
<dbReference type="PathwayCommons" id="Q6P1K1"/>
<dbReference type="SignaLink" id="Q6P1K1"/>
<dbReference type="BioGRID-ORCS" id="55652">
    <property type="hits" value="17 hits in 1153 CRISPR screens"/>
</dbReference>
<dbReference type="ChiTaRS" id="SLC48A1">
    <property type="organism name" value="human"/>
</dbReference>
<dbReference type="GenomeRNAi" id="55652"/>
<dbReference type="Pharos" id="Q6P1K1">
    <property type="development level" value="Tbio"/>
</dbReference>
<dbReference type="PRO" id="PR:Q6P1K1"/>
<dbReference type="Proteomes" id="UP000005640">
    <property type="component" value="Chromosome 12"/>
</dbReference>
<dbReference type="RNAct" id="Q6P1K1">
    <property type="molecule type" value="protein"/>
</dbReference>
<dbReference type="Bgee" id="ENSG00000211584">
    <property type="expression patterns" value="Expressed in C1 segment of cervical spinal cord and 190 other cell types or tissues"/>
</dbReference>
<dbReference type="ExpressionAtlas" id="Q6P1K1">
    <property type="expression patterns" value="baseline and differential"/>
</dbReference>
<dbReference type="GO" id="GO:0036019">
    <property type="term" value="C:endolysosome"/>
    <property type="evidence" value="ECO:0007669"/>
    <property type="project" value="Ensembl"/>
</dbReference>
<dbReference type="GO" id="GO:0010008">
    <property type="term" value="C:endosome membrane"/>
    <property type="evidence" value="ECO:0000314"/>
    <property type="project" value="WormBase"/>
</dbReference>
<dbReference type="GO" id="GO:0005765">
    <property type="term" value="C:lysosomal membrane"/>
    <property type="evidence" value="ECO:0000314"/>
    <property type="project" value="WormBase"/>
</dbReference>
<dbReference type="GO" id="GO:0061474">
    <property type="term" value="C:phagolysosome membrane"/>
    <property type="evidence" value="ECO:0007669"/>
    <property type="project" value="Ensembl"/>
</dbReference>
<dbReference type="GO" id="GO:0005886">
    <property type="term" value="C:plasma membrane"/>
    <property type="evidence" value="ECO:0000314"/>
    <property type="project" value="WormBase"/>
</dbReference>
<dbReference type="GO" id="GO:0020037">
    <property type="term" value="F:heme binding"/>
    <property type="evidence" value="ECO:0000314"/>
    <property type="project" value="WormBase"/>
</dbReference>
<dbReference type="GO" id="GO:0015232">
    <property type="term" value="F:heme transmembrane transporter activity"/>
    <property type="evidence" value="ECO:0000314"/>
    <property type="project" value="WormBase"/>
</dbReference>
<dbReference type="GO" id="GO:0030218">
    <property type="term" value="P:erythrocyte differentiation"/>
    <property type="evidence" value="ECO:0007669"/>
    <property type="project" value="Ensembl"/>
</dbReference>
<dbReference type="GO" id="GO:0097037">
    <property type="term" value="P:heme export"/>
    <property type="evidence" value="ECO:0007669"/>
    <property type="project" value="Ensembl"/>
</dbReference>
<dbReference type="GO" id="GO:0140357">
    <property type="term" value="P:heme export from vacuole to cytoplasm"/>
    <property type="evidence" value="ECO:0007669"/>
    <property type="project" value="Ensembl"/>
</dbReference>
<dbReference type="GO" id="GO:0042168">
    <property type="term" value="P:heme metabolic process"/>
    <property type="evidence" value="ECO:0007669"/>
    <property type="project" value="Ensembl"/>
</dbReference>
<dbReference type="GO" id="GO:0015886">
    <property type="term" value="P:heme transport"/>
    <property type="evidence" value="ECO:0000314"/>
    <property type="project" value="WormBase"/>
</dbReference>
<dbReference type="GO" id="GO:0051674">
    <property type="term" value="P:localization of cell"/>
    <property type="evidence" value="ECO:0007669"/>
    <property type="project" value="Ensembl"/>
</dbReference>
<dbReference type="GO" id="GO:0007041">
    <property type="term" value="P:lysosomal transport"/>
    <property type="evidence" value="ECO:0007669"/>
    <property type="project" value="Ensembl"/>
</dbReference>
<dbReference type="GO" id="GO:0006909">
    <property type="term" value="P:phagocytosis"/>
    <property type="evidence" value="ECO:0007669"/>
    <property type="project" value="Ensembl"/>
</dbReference>
<dbReference type="InterPro" id="IPR026218">
    <property type="entry name" value="HRG"/>
</dbReference>
<dbReference type="PANTHER" id="PTHR31525">
    <property type="entry name" value="HEME TRANSPORTER HRG1"/>
    <property type="match status" value="1"/>
</dbReference>
<dbReference type="PANTHER" id="PTHR31525:SF1">
    <property type="entry name" value="HEME TRANSPORTER HRG1"/>
    <property type="match status" value="1"/>
</dbReference>
<dbReference type="Pfam" id="PF16954">
    <property type="entry name" value="HRG"/>
    <property type="match status" value="2"/>
</dbReference>
<dbReference type="PRINTS" id="PR02095">
    <property type="entry name" value="TRNSPORTRHRG"/>
</dbReference>
<sequence>MAPSRLQLGLRAAYSGISSVAGFSIFLVWTVVYRQPGTAAMGGLAGVLALWVLVTHVMYMQDYWRTWLKGLRGFFFVGVLFSAVSIAAFCTFLVLAITRHQSLTDPTSYYLSSVWSFISFKWAFLLSLYAHRYRADFADISILSDF</sequence>
<evidence type="ECO:0000250" key="1">
    <source>
        <dbReference type="UniProtKB" id="Q9D8M3"/>
    </source>
</evidence>
<evidence type="ECO:0000255" key="2"/>
<evidence type="ECO:0000269" key="3">
    <source>
    </source>
</evidence>
<evidence type="ECO:0000269" key="4">
    <source>
    </source>
</evidence>
<evidence type="ECO:0000303" key="5">
    <source>
    </source>
</evidence>
<evidence type="ECO:0000305" key="6"/>
<evidence type="ECO:0000305" key="7">
    <source>
    </source>
</evidence>
<evidence type="ECO:0000305" key="8">
    <source>
    </source>
</evidence>
<evidence type="ECO:0000312" key="9">
    <source>
        <dbReference type="HGNC" id="HGNC:26035"/>
    </source>
</evidence>
<name>HRG1_HUMAN</name>
<organism>
    <name type="scientific">Homo sapiens</name>
    <name type="common">Human</name>
    <dbReference type="NCBI Taxonomy" id="9606"/>
    <lineage>
        <taxon>Eukaryota</taxon>
        <taxon>Metazoa</taxon>
        <taxon>Chordata</taxon>
        <taxon>Craniata</taxon>
        <taxon>Vertebrata</taxon>
        <taxon>Euteleostomi</taxon>
        <taxon>Mammalia</taxon>
        <taxon>Eutheria</taxon>
        <taxon>Euarchontoglires</taxon>
        <taxon>Primates</taxon>
        <taxon>Haplorrhini</taxon>
        <taxon>Catarrhini</taxon>
        <taxon>Hominidae</taxon>
        <taxon>Homo</taxon>
    </lineage>
</organism>
<gene>
    <name evidence="9" type="primary">SLC48A1</name>
    <name type="synonym">HRG1</name>
</gene>
<accession>Q6P1K1</accession>
<accession>Q9BUB3</accession>
<accession>Q9NX17</accession>
<protein>
    <recommendedName>
        <fullName evidence="6">Heme transporter HRG1</fullName>
    </recommendedName>
    <alternativeName>
        <fullName>Heme-responsive gene 1 protein homolog</fullName>
        <shortName>HRG-1</shortName>
        <shortName>hHRG-1</shortName>
    </alternativeName>
    <alternativeName>
        <fullName>Solute carrier family 48 member 1</fullName>
    </alternativeName>
</protein>
<proteinExistence type="evidence at protein level"/>
<feature type="chain" id="PRO_0000348575" description="Heme transporter HRG1">
    <location>
        <begin position="1"/>
        <end position="146"/>
    </location>
</feature>
<feature type="transmembrane region" description="Helical" evidence="2">
    <location>
        <begin position="12"/>
        <end position="32"/>
    </location>
</feature>
<feature type="transmembrane region" description="Helical" evidence="2">
    <location>
        <begin position="40"/>
        <end position="60"/>
    </location>
</feature>
<feature type="transmembrane region" description="Helical" evidence="2">
    <location>
        <begin position="74"/>
        <end position="94"/>
    </location>
</feature>
<feature type="transmembrane region" description="Helical" evidence="2">
    <location>
        <begin position="110"/>
        <end position="130"/>
    </location>
</feature>
<feature type="short sequence motif" description="Di-leucine motif">
    <location>
        <begin position="142"/>
        <end position="143"/>
    </location>
</feature>
<feature type="splice variant" id="VSP_035184" description="In isoform 2." evidence="5">
    <location>
        <begin position="1"/>
        <end position="57"/>
    </location>
</feature>
<feature type="mutagenesis site" description="Strongly decreases heme transport." evidence="4">
    <original>P</original>
    <variation>L</variation>
    <location>
        <position position="36"/>
    </location>
</feature>
<feature type="mutagenesis site" description="No effect on heme transport." evidence="4">
    <original>G</original>
    <variation>S</variation>
    <location>
        <position position="73"/>
    </location>
</feature>
<feature type="mutagenesis site" description="No effect on heme transport." evidence="4">
    <original>S</original>
    <variation>L</variation>
    <location>
        <position position="82"/>
    </location>
</feature>
<feature type="mutagenesis site" description="Slightly decreases heme transport." evidence="4">
    <original>W</original>
    <variation>C</variation>
    <location>
        <position position="115"/>
    </location>
</feature>
<keyword id="KW-0025">Alternative splicing</keyword>
<keyword id="KW-0968">Cytoplasmic vesicle</keyword>
<keyword id="KW-0967">Endosome</keyword>
<keyword id="KW-0458">Lysosome</keyword>
<keyword id="KW-0472">Membrane</keyword>
<keyword id="KW-1267">Proteomics identification</keyword>
<keyword id="KW-1185">Reference proteome</keyword>
<keyword id="KW-0812">Transmembrane</keyword>
<keyword id="KW-1133">Transmembrane helix</keyword>
<keyword id="KW-0813">Transport</keyword>
<comment type="function">
    <text evidence="3 4">Heme transporter that regulates intracellular heme availability through the endosomal or lysosomal compartment (PubMed:18418376). In macrophages of the reticuloendothelial system, is the heme transporter for heme-iron recycling. Essential for macrophage iron homeostasis, transports heme from the phagolysosome to the cytoplasm during erythrophagocytosis (EP) (PubMed:23395172).</text>
</comment>
<comment type="catalytic activity">
    <reaction evidence="7 8">
        <text>heme b(in) = heme b(out)</text>
        <dbReference type="Rhea" id="RHEA:75443"/>
        <dbReference type="ChEBI" id="CHEBI:60344"/>
    </reaction>
</comment>
<comment type="interaction">
    <interactant intactId="EBI-1222191">
        <id>Q6P1K1</id>
    </interactant>
    <interactant intactId="EBI-372265">
        <id>P21964</id>
        <label>COMT</label>
    </interactant>
    <organismsDiffer>false</organismsDiffer>
    <experiments>3</experiments>
</comment>
<comment type="interaction">
    <interactant intactId="EBI-1222191">
        <id>Q6P1K1</id>
    </interactant>
    <interactant intactId="EBI-3915253">
        <id>Q15125</id>
        <label>EBP</label>
    </interactant>
    <organismsDiffer>false</organismsDiffer>
    <experiments>3</experiments>
</comment>
<comment type="interaction">
    <interactant intactId="EBI-1222191">
        <id>Q6P1K1</id>
    </interactant>
    <interactant intactId="EBI-2805407">
        <id>P11279</id>
        <label>LAMP1</label>
    </interactant>
    <organismsDiffer>false</organismsDiffer>
    <experiments>3</experiments>
</comment>
<comment type="interaction">
    <interactant intactId="EBI-1222191">
        <id>Q6P1K1</id>
    </interactant>
    <interactant intactId="EBI-7055862">
        <id>Q96B96</id>
        <label>LDAF1</label>
    </interactant>
    <organismsDiffer>false</organismsDiffer>
    <experiments>3</experiments>
</comment>
<comment type="interaction">
    <interactant intactId="EBI-1222191">
        <id>Q6P1K1</id>
    </interactant>
    <interactant intactId="EBI-748397">
        <id>P50222</id>
        <label>MEOX2</label>
    </interactant>
    <organismsDiffer>false</organismsDiffer>
    <experiments>3</experiments>
</comment>
<comment type="interaction">
    <interactant intactId="EBI-1222191">
        <id>Q6P1K1</id>
    </interactant>
    <interactant intactId="EBI-8638294">
        <id>Q9NUH8</id>
        <label>TMEM14B</label>
    </interactant>
    <organismsDiffer>false</organismsDiffer>
    <experiments>3</experiments>
</comment>
<comment type="interaction">
    <interactant intactId="EBI-1222191">
        <id>Q6P1K1</id>
    </interactant>
    <interactant intactId="EBI-13356252">
        <id>Q86WB7-2</id>
        <label>UNC93A</label>
    </interactant>
    <organismsDiffer>false</organismsDiffer>
    <experiments>3</experiments>
</comment>
<comment type="subcellular location">
    <subcellularLocation>
        <location evidence="3 4">Endosome membrane</location>
        <topology evidence="3">Multi-pass membrane protein</topology>
    </subcellularLocation>
    <subcellularLocation>
        <location evidence="3 4">Lysosome membrane</location>
        <topology evidence="3">Multi-pass membrane protein</topology>
    </subcellularLocation>
    <subcellularLocation>
        <location evidence="1">Cytoplasmic vesicle</location>
        <location evidence="1">Phagosome membrane</location>
        <topology evidence="2">Multi-pass membrane protein</topology>
    </subcellularLocation>
    <text evidence="1">In macrophages, specifically localizes to the phagolysosomal membranes during erythrophagocytosis.</text>
</comment>
<comment type="alternative products">
    <event type="alternative splicing"/>
    <isoform>
        <id>Q6P1K1-1</id>
        <name>1</name>
        <sequence type="displayed"/>
    </isoform>
    <isoform>
        <id>Q6P1K1-2</id>
        <name>2</name>
        <sequence type="described" ref="VSP_035184"/>
    </isoform>
</comment>
<comment type="tissue specificity">
    <text evidence="3 4">Highly expressed in the brain, kidney, heart and skeletal muscle. Moderately expressed in the liver, lung, placenta and small intestine. Strongly expressed in macrophages of the reticuloendothelial system (PubMed:23395172).</text>
</comment>
<comment type="induction">
    <text evidence="4">Induced by iron via heme and non-iron metalloporphyrins in macrophages as well as by erythrophagocytosis (at protein level). Also induced by hemolysis.</text>
</comment>
<comment type="similarity">
    <text evidence="6">Belongs to the HRG family.</text>
</comment>
<comment type="sequence caution" evidence="6">
    <conflict type="erroneous translation">
        <sequence resource="EMBL-CDS" id="AAH26344"/>
    </conflict>
    <text>Wrong choice of CDS.</text>
</comment>
<comment type="sequence caution" evidence="6">
    <conflict type="erroneous translation">
        <sequence resource="EMBL-CDS" id="BAA91205"/>
    </conflict>
    <text>Wrong choice of CDS.</text>
</comment>
<comment type="sequence caution" evidence="6">
    <conflict type="erroneous gene model prediction">
        <sequence resource="EMBL-CDS" id="EAW57951"/>
    </conflict>
</comment>